<gene>
    <name type="primary">hemD</name>
    <name type="ordered locus">PA5259</name>
</gene>
<comment type="function">
    <text evidence="1">Catalyzes cyclization of the linear tetrapyrrole, hydroxymethylbilane, to the macrocyclic uroporphyrinogen III.</text>
</comment>
<comment type="catalytic activity">
    <reaction>
        <text>hydroxymethylbilane = uroporphyrinogen III + H2O</text>
        <dbReference type="Rhea" id="RHEA:18965"/>
        <dbReference type="ChEBI" id="CHEBI:15377"/>
        <dbReference type="ChEBI" id="CHEBI:57308"/>
        <dbReference type="ChEBI" id="CHEBI:57845"/>
        <dbReference type="EC" id="4.2.1.75"/>
    </reaction>
</comment>
<comment type="pathway">
    <text>Porphyrin-containing compound metabolism; protoporphyrin-IX biosynthesis; coproporphyrinogen-III from 5-aminolevulinate: step 3/4.</text>
</comment>
<comment type="subunit">
    <text evidence="2">Monomer.</text>
</comment>
<comment type="similarity">
    <text evidence="3">Belongs to the uroporphyrinogen-III synthase family.</text>
</comment>
<organism>
    <name type="scientific">Pseudomonas aeruginosa (strain ATCC 15692 / DSM 22644 / CIP 104116 / JCM 14847 / LMG 12228 / 1C / PRS 101 / PAO1)</name>
    <dbReference type="NCBI Taxonomy" id="208964"/>
    <lineage>
        <taxon>Bacteria</taxon>
        <taxon>Pseudomonadati</taxon>
        <taxon>Pseudomonadota</taxon>
        <taxon>Gammaproteobacteria</taxon>
        <taxon>Pseudomonadales</taxon>
        <taxon>Pseudomonadaceae</taxon>
        <taxon>Pseudomonas</taxon>
    </lineage>
</organism>
<sequence length="251" mass="27279">MSGWRLLLTRPDEECAALAASLGEAGVHSSSLPLLAIDPLEETPEQRTLMLDLDRYCAVVVVSKPAARLGLERLDRYWPQPPQQTWCSVGAATAAILEAYGLDVTYPEQGDDSEALLALPAFQDSLRVHDPKVLIMRGEGGREFLAERLRGQGVQVDYLPLYRRRAPDYPAGELLARVRAERLNGLVVSSGQGLQNLYQLAAADWPEIGRLPLFVPSPRVAEMARELGAQRVIDCRGASAPALLAALTSAA</sequence>
<accession>P48246</accession>
<proteinExistence type="evidence at protein level"/>
<feature type="chain" id="PRO_0000135245" description="Uroporphyrinogen-III synthase">
    <location>
        <begin position="1"/>
        <end position="251"/>
    </location>
</feature>
<feature type="sequence conflict" description="In Ref. 1; AAA18908." evidence="3" ref="1">
    <original>QNLYQLAAA</original>
    <variation>PKSVSVGGS</variation>
    <location>
        <begin position="195"/>
        <end position="203"/>
    </location>
</feature>
<feature type="strand" evidence="4">
    <location>
        <begin position="5"/>
        <end position="8"/>
    </location>
</feature>
<feature type="helix" evidence="4">
    <location>
        <begin position="12"/>
        <end position="24"/>
    </location>
</feature>
<feature type="strand" evidence="4">
    <location>
        <begin position="28"/>
        <end position="31"/>
    </location>
</feature>
<feature type="strand" evidence="4">
    <location>
        <begin position="36"/>
        <end position="39"/>
    </location>
</feature>
<feature type="helix" evidence="4">
    <location>
        <begin position="44"/>
        <end position="51"/>
    </location>
</feature>
<feature type="helix" evidence="4">
    <location>
        <begin position="53"/>
        <end position="55"/>
    </location>
</feature>
<feature type="strand" evidence="4">
    <location>
        <begin position="57"/>
        <end position="61"/>
    </location>
</feature>
<feature type="helix" evidence="4">
    <location>
        <begin position="64"/>
        <end position="77"/>
    </location>
</feature>
<feature type="strand" evidence="4">
    <location>
        <begin position="85"/>
        <end position="90"/>
    </location>
</feature>
<feature type="helix" evidence="4">
    <location>
        <begin position="91"/>
        <end position="100"/>
    </location>
</feature>
<feature type="helix" evidence="4">
    <location>
        <begin position="113"/>
        <end position="117"/>
    </location>
</feature>
<feature type="helix" evidence="4">
    <location>
        <begin position="120"/>
        <end position="125"/>
    </location>
</feature>
<feature type="strand" evidence="4">
    <location>
        <begin position="128"/>
        <end position="130"/>
    </location>
</feature>
<feature type="strand" evidence="4">
    <location>
        <begin position="132"/>
        <end position="137"/>
    </location>
</feature>
<feature type="helix" evidence="4">
    <location>
        <begin position="144"/>
        <end position="151"/>
    </location>
</feature>
<feature type="strand" evidence="4">
    <location>
        <begin position="155"/>
        <end position="160"/>
    </location>
</feature>
<feature type="strand" evidence="4">
    <location>
        <begin position="162"/>
        <end position="165"/>
    </location>
</feature>
<feature type="helix" evidence="4">
    <location>
        <begin position="173"/>
        <end position="180"/>
    </location>
</feature>
<feature type="strand" evidence="4">
    <location>
        <begin position="185"/>
        <end position="187"/>
    </location>
</feature>
<feature type="helix" evidence="4">
    <location>
        <begin position="191"/>
        <end position="201"/>
    </location>
</feature>
<feature type="helix" evidence="4">
    <location>
        <begin position="202"/>
        <end position="204"/>
    </location>
</feature>
<feature type="helix" evidence="4">
    <location>
        <begin position="205"/>
        <end position="208"/>
    </location>
</feature>
<feature type="strand" evidence="4">
    <location>
        <begin position="213"/>
        <end position="217"/>
    </location>
</feature>
<feature type="helix" evidence="4">
    <location>
        <begin position="218"/>
        <end position="226"/>
    </location>
</feature>
<feature type="strand" evidence="4">
    <location>
        <begin position="230"/>
        <end position="234"/>
    </location>
</feature>
<feature type="strand" evidence="4">
    <location>
        <begin position="236"/>
        <end position="239"/>
    </location>
</feature>
<feature type="helix" evidence="4">
    <location>
        <begin position="240"/>
        <end position="249"/>
    </location>
</feature>
<protein>
    <recommendedName>
        <fullName>Uroporphyrinogen-III synthase</fullName>
        <shortName>UROS</shortName>
        <ecNumber>4.2.1.75</ecNumber>
    </recommendedName>
    <alternativeName>
        <fullName>Hydroxymethylbilane hydrolyase [cyclizing]</fullName>
    </alternativeName>
    <alternativeName>
        <fullName>Uroporphyrinogen-III cosynthase</fullName>
    </alternativeName>
</protein>
<keyword id="KW-0002">3D-structure</keyword>
<keyword id="KW-0456">Lyase</keyword>
<keyword id="KW-0627">Porphyrin biosynthesis</keyword>
<keyword id="KW-1185">Reference proteome</keyword>
<evidence type="ECO:0000250" key="1"/>
<evidence type="ECO:0000269" key="2">
    <source>
    </source>
</evidence>
<evidence type="ECO:0000305" key="3"/>
<evidence type="ECO:0007829" key="4">
    <source>
        <dbReference type="PDB" id="4ES6"/>
    </source>
</evidence>
<name>HEM4_PSEAE</name>
<reference key="1">
    <citation type="journal article" date="1994" name="Mol. Gen. Genet.">
        <title>The Pseudomonas aeruginosa homologs of hemC and hemD are linked to the gene encoding the regulator of mucoidy AlgR.</title>
        <authorList>
            <person name="Mohr C.D."/>
            <person name="Sonsteby S.K."/>
            <person name="Deretic V."/>
        </authorList>
    </citation>
    <scope>NUCLEOTIDE SEQUENCE [GENOMIC DNA]</scope>
</reference>
<reference key="2">
    <citation type="journal article" date="2000" name="Nature">
        <title>Complete genome sequence of Pseudomonas aeruginosa PAO1, an opportunistic pathogen.</title>
        <authorList>
            <person name="Stover C.K."/>
            <person name="Pham X.-Q.T."/>
            <person name="Erwin A.L."/>
            <person name="Mizoguchi S.D."/>
            <person name="Warrener P."/>
            <person name="Hickey M.J."/>
            <person name="Brinkman F.S.L."/>
            <person name="Hufnagle W.O."/>
            <person name="Kowalik D.J."/>
            <person name="Lagrou M."/>
            <person name="Garber R.L."/>
            <person name="Goltry L."/>
            <person name="Tolentino E."/>
            <person name="Westbrock-Wadman S."/>
            <person name="Yuan Y."/>
            <person name="Brody L.L."/>
            <person name="Coulter S.N."/>
            <person name="Folger K.R."/>
            <person name="Kas A."/>
            <person name="Larbig K."/>
            <person name="Lim R.M."/>
            <person name="Smith K.A."/>
            <person name="Spencer D.H."/>
            <person name="Wong G.K.-S."/>
            <person name="Wu Z."/>
            <person name="Paulsen I.T."/>
            <person name="Reizer J."/>
            <person name="Saier M.H. Jr."/>
            <person name="Hancock R.E.W."/>
            <person name="Lory S."/>
            <person name="Olson M.V."/>
        </authorList>
    </citation>
    <scope>NUCLEOTIDE SEQUENCE [LARGE SCALE GENOMIC DNA]</scope>
    <source>
        <strain>ATCC 15692 / DSM 22644 / CIP 104116 / JCM 14847 / LMG 12228 / 1C / PRS 101 / PAO1</strain>
    </source>
</reference>
<reference key="3">
    <citation type="journal article" date="2013" name="Acta Crystallogr. F">
        <title>The AEROPATH project targeting Pseudomonas aeruginosa: crystallographic studies for assessment of potential targets in early-stage drug discovery.</title>
        <authorList>
            <person name="Moynie L."/>
            <person name="Schnell R."/>
            <person name="McMahon S.A."/>
            <person name="Sandalova T."/>
            <person name="Boulkerou W.A."/>
            <person name="Schmidberger J.W."/>
            <person name="Alphey M."/>
            <person name="Cukier C."/>
            <person name="Duthie F."/>
            <person name="Kopec J."/>
            <person name="Liu H."/>
            <person name="Jacewicz A."/>
            <person name="Hunter W.N."/>
            <person name="Naismith J.H."/>
            <person name="Schneider G."/>
        </authorList>
    </citation>
    <scope>X-RAY CRYSTALLOGRAPHY (2.22 ANGSTROMS) OF APOPROTEIN</scope>
    <scope>SUBUNIT</scope>
</reference>
<dbReference type="EC" id="4.2.1.75"/>
<dbReference type="EMBL" id="M74844">
    <property type="protein sequence ID" value="AAA18908.1"/>
    <property type="molecule type" value="Genomic_DNA"/>
</dbReference>
<dbReference type="EMBL" id="AE004091">
    <property type="protein sequence ID" value="AAG08644.1"/>
    <property type="molecule type" value="Genomic_DNA"/>
</dbReference>
<dbReference type="PIR" id="A82989">
    <property type="entry name" value="A82989"/>
</dbReference>
<dbReference type="PIR" id="S41587">
    <property type="entry name" value="S41587"/>
</dbReference>
<dbReference type="RefSeq" id="NP_253946.1">
    <property type="nucleotide sequence ID" value="NC_002516.2"/>
</dbReference>
<dbReference type="RefSeq" id="WP_003114032.1">
    <property type="nucleotide sequence ID" value="NZ_QZGE01000002.1"/>
</dbReference>
<dbReference type="PDB" id="4ES6">
    <property type="method" value="X-ray"/>
    <property type="resolution" value="2.22 A"/>
    <property type="chains" value="A=1-251"/>
</dbReference>
<dbReference type="PDB" id="6TH8">
    <property type="method" value="NMR"/>
    <property type="chains" value="A=130-251"/>
</dbReference>
<dbReference type="PDBsum" id="4ES6"/>
<dbReference type="PDBsum" id="6TH8"/>
<dbReference type="BMRB" id="P48246"/>
<dbReference type="SMR" id="P48246"/>
<dbReference type="FunCoup" id="P48246">
    <property type="interactions" value="169"/>
</dbReference>
<dbReference type="STRING" id="208964.PA5259"/>
<dbReference type="PaxDb" id="208964-PA5259"/>
<dbReference type="DNASU" id="879724"/>
<dbReference type="GeneID" id="879724"/>
<dbReference type="KEGG" id="pae:PA5259"/>
<dbReference type="PATRIC" id="fig|208964.12.peg.5512"/>
<dbReference type="PseudoCAP" id="PA5259"/>
<dbReference type="HOGENOM" id="CLU_011276_9_4_6"/>
<dbReference type="InParanoid" id="P48246"/>
<dbReference type="OrthoDB" id="9787650at2"/>
<dbReference type="PhylomeDB" id="P48246"/>
<dbReference type="BioCyc" id="PAER208964:G1FZ6-5380-MONOMER"/>
<dbReference type="UniPathway" id="UPA00251">
    <property type="reaction ID" value="UER00320"/>
</dbReference>
<dbReference type="EvolutionaryTrace" id="P48246"/>
<dbReference type="Proteomes" id="UP000002438">
    <property type="component" value="Chromosome"/>
</dbReference>
<dbReference type="GO" id="GO:0004852">
    <property type="term" value="F:uroporphyrinogen-III synthase activity"/>
    <property type="evidence" value="ECO:0000250"/>
    <property type="project" value="PseudoCAP"/>
</dbReference>
<dbReference type="GO" id="GO:0006782">
    <property type="term" value="P:protoporphyrinogen IX biosynthetic process"/>
    <property type="evidence" value="ECO:0007669"/>
    <property type="project" value="UniProtKB-UniPathway"/>
</dbReference>
<dbReference type="GO" id="GO:0006780">
    <property type="term" value="P:uroporphyrinogen III biosynthetic process"/>
    <property type="evidence" value="ECO:0007669"/>
    <property type="project" value="InterPro"/>
</dbReference>
<dbReference type="CDD" id="cd06578">
    <property type="entry name" value="HemD"/>
    <property type="match status" value="1"/>
</dbReference>
<dbReference type="Gene3D" id="3.40.50.10090">
    <property type="match status" value="2"/>
</dbReference>
<dbReference type="InterPro" id="IPR036108">
    <property type="entry name" value="4pyrrol_syn_uPrphyn_synt_sf"/>
</dbReference>
<dbReference type="InterPro" id="IPR003754">
    <property type="entry name" value="4pyrrol_synth_uPrphyn_synth"/>
</dbReference>
<dbReference type="InterPro" id="IPR039793">
    <property type="entry name" value="UROS/Hem4"/>
</dbReference>
<dbReference type="NCBIfam" id="NF004395">
    <property type="entry name" value="PRK05752.1"/>
    <property type="match status" value="1"/>
</dbReference>
<dbReference type="PANTHER" id="PTHR38042">
    <property type="entry name" value="UROPORPHYRINOGEN-III SYNTHASE, CHLOROPLASTIC"/>
    <property type="match status" value="1"/>
</dbReference>
<dbReference type="PANTHER" id="PTHR38042:SF1">
    <property type="entry name" value="UROPORPHYRINOGEN-III SYNTHASE, CHLOROPLASTIC"/>
    <property type="match status" value="1"/>
</dbReference>
<dbReference type="Pfam" id="PF02602">
    <property type="entry name" value="HEM4"/>
    <property type="match status" value="1"/>
</dbReference>
<dbReference type="SUPFAM" id="SSF69618">
    <property type="entry name" value="HemD-like"/>
    <property type="match status" value="1"/>
</dbReference>